<dbReference type="EC" id="6.3.2.13" evidence="1"/>
<dbReference type="EMBL" id="CP000557">
    <property type="protein sequence ID" value="ABO66358.1"/>
    <property type="molecule type" value="Genomic_DNA"/>
</dbReference>
<dbReference type="RefSeq" id="WP_011887098.1">
    <property type="nucleotide sequence ID" value="NC_009328.1"/>
</dbReference>
<dbReference type="SMR" id="A4IM04"/>
<dbReference type="KEGG" id="gtn:GTNG_0980"/>
<dbReference type="eggNOG" id="COG0769">
    <property type="taxonomic scope" value="Bacteria"/>
</dbReference>
<dbReference type="HOGENOM" id="CLU_022291_4_1_9"/>
<dbReference type="UniPathway" id="UPA00219"/>
<dbReference type="Proteomes" id="UP000001578">
    <property type="component" value="Chromosome"/>
</dbReference>
<dbReference type="GO" id="GO:0005737">
    <property type="term" value="C:cytoplasm"/>
    <property type="evidence" value="ECO:0007669"/>
    <property type="project" value="UniProtKB-SubCell"/>
</dbReference>
<dbReference type="GO" id="GO:0005524">
    <property type="term" value="F:ATP binding"/>
    <property type="evidence" value="ECO:0007669"/>
    <property type="project" value="UniProtKB-UniRule"/>
</dbReference>
<dbReference type="GO" id="GO:0000287">
    <property type="term" value="F:magnesium ion binding"/>
    <property type="evidence" value="ECO:0007669"/>
    <property type="project" value="UniProtKB-UniRule"/>
</dbReference>
<dbReference type="GO" id="GO:0008765">
    <property type="term" value="F:UDP-N-acetylmuramoylalanyl-D-glutamate-2,6-diaminopimelate ligase activity"/>
    <property type="evidence" value="ECO:0007669"/>
    <property type="project" value="UniProtKB-UniRule"/>
</dbReference>
<dbReference type="GO" id="GO:0051301">
    <property type="term" value="P:cell division"/>
    <property type="evidence" value="ECO:0007669"/>
    <property type="project" value="UniProtKB-KW"/>
</dbReference>
<dbReference type="GO" id="GO:0071555">
    <property type="term" value="P:cell wall organization"/>
    <property type="evidence" value="ECO:0007669"/>
    <property type="project" value="UniProtKB-KW"/>
</dbReference>
<dbReference type="GO" id="GO:0009252">
    <property type="term" value="P:peptidoglycan biosynthetic process"/>
    <property type="evidence" value="ECO:0007669"/>
    <property type="project" value="UniProtKB-UniRule"/>
</dbReference>
<dbReference type="GO" id="GO:0008360">
    <property type="term" value="P:regulation of cell shape"/>
    <property type="evidence" value="ECO:0007669"/>
    <property type="project" value="UniProtKB-KW"/>
</dbReference>
<dbReference type="FunFam" id="3.40.1390.10:FF:000005">
    <property type="entry name" value="UDP-N-acetylmuramoyl-L-alanyl-D-glutamate--2,6-diaminopimelate ligase"/>
    <property type="match status" value="1"/>
</dbReference>
<dbReference type="FunFam" id="3.90.190.20:FF:000006">
    <property type="entry name" value="UDP-N-acetylmuramoyl-L-alanyl-D-glutamate--2,6-diaminopimelate ligase"/>
    <property type="match status" value="1"/>
</dbReference>
<dbReference type="Gene3D" id="3.90.190.20">
    <property type="entry name" value="Mur ligase, C-terminal domain"/>
    <property type="match status" value="1"/>
</dbReference>
<dbReference type="Gene3D" id="3.40.1190.10">
    <property type="entry name" value="Mur-like, catalytic domain"/>
    <property type="match status" value="1"/>
</dbReference>
<dbReference type="Gene3D" id="3.40.1390.10">
    <property type="entry name" value="MurE/MurF, N-terminal domain"/>
    <property type="match status" value="1"/>
</dbReference>
<dbReference type="HAMAP" id="MF_00208">
    <property type="entry name" value="MurE"/>
    <property type="match status" value="1"/>
</dbReference>
<dbReference type="InterPro" id="IPR036565">
    <property type="entry name" value="Mur-like_cat_sf"/>
</dbReference>
<dbReference type="InterPro" id="IPR004101">
    <property type="entry name" value="Mur_ligase_C"/>
</dbReference>
<dbReference type="InterPro" id="IPR036615">
    <property type="entry name" value="Mur_ligase_C_dom_sf"/>
</dbReference>
<dbReference type="InterPro" id="IPR013221">
    <property type="entry name" value="Mur_ligase_cen"/>
</dbReference>
<dbReference type="InterPro" id="IPR000713">
    <property type="entry name" value="Mur_ligase_N"/>
</dbReference>
<dbReference type="InterPro" id="IPR035911">
    <property type="entry name" value="MurE/MurF_N"/>
</dbReference>
<dbReference type="InterPro" id="IPR005761">
    <property type="entry name" value="UDP-N-AcMur-Glu-dNH2Pim_ligase"/>
</dbReference>
<dbReference type="NCBIfam" id="TIGR01085">
    <property type="entry name" value="murE"/>
    <property type="match status" value="1"/>
</dbReference>
<dbReference type="NCBIfam" id="NF001124">
    <property type="entry name" value="PRK00139.1-2"/>
    <property type="match status" value="1"/>
</dbReference>
<dbReference type="NCBIfam" id="NF001126">
    <property type="entry name" value="PRK00139.1-4"/>
    <property type="match status" value="1"/>
</dbReference>
<dbReference type="PANTHER" id="PTHR23135">
    <property type="entry name" value="MUR LIGASE FAMILY MEMBER"/>
    <property type="match status" value="1"/>
</dbReference>
<dbReference type="PANTHER" id="PTHR23135:SF4">
    <property type="entry name" value="UDP-N-ACETYLMURAMOYL-L-ALANYL-D-GLUTAMATE--2,6-DIAMINOPIMELATE LIGASE MURE HOMOLOG, CHLOROPLASTIC"/>
    <property type="match status" value="1"/>
</dbReference>
<dbReference type="Pfam" id="PF01225">
    <property type="entry name" value="Mur_ligase"/>
    <property type="match status" value="1"/>
</dbReference>
<dbReference type="Pfam" id="PF02875">
    <property type="entry name" value="Mur_ligase_C"/>
    <property type="match status" value="1"/>
</dbReference>
<dbReference type="Pfam" id="PF08245">
    <property type="entry name" value="Mur_ligase_M"/>
    <property type="match status" value="1"/>
</dbReference>
<dbReference type="SUPFAM" id="SSF53623">
    <property type="entry name" value="MurD-like peptide ligases, catalytic domain"/>
    <property type="match status" value="1"/>
</dbReference>
<dbReference type="SUPFAM" id="SSF53244">
    <property type="entry name" value="MurD-like peptide ligases, peptide-binding domain"/>
    <property type="match status" value="1"/>
</dbReference>
<dbReference type="SUPFAM" id="SSF63418">
    <property type="entry name" value="MurE/MurF N-terminal domain"/>
    <property type="match status" value="1"/>
</dbReference>
<organism>
    <name type="scientific">Geobacillus thermodenitrificans (strain NG80-2)</name>
    <dbReference type="NCBI Taxonomy" id="420246"/>
    <lineage>
        <taxon>Bacteria</taxon>
        <taxon>Bacillati</taxon>
        <taxon>Bacillota</taxon>
        <taxon>Bacilli</taxon>
        <taxon>Bacillales</taxon>
        <taxon>Anoxybacillaceae</taxon>
        <taxon>Geobacillus</taxon>
    </lineage>
</organism>
<feature type="chain" id="PRO_1000012355" description="UDP-N-acetylmuramoyl-L-alanyl-D-glutamate--2,6-diaminopimelate ligase">
    <location>
        <begin position="1"/>
        <end position="489"/>
    </location>
</feature>
<feature type="short sequence motif" description="Meso-diaminopimelate recognition motif">
    <location>
        <begin position="407"/>
        <end position="410"/>
    </location>
</feature>
<feature type="binding site" evidence="1">
    <location>
        <position position="30"/>
    </location>
    <ligand>
        <name>UDP-N-acetyl-alpha-D-muramoyl-L-alanyl-D-glutamate</name>
        <dbReference type="ChEBI" id="CHEBI:83900"/>
    </ligand>
</feature>
<feature type="binding site" evidence="1">
    <location>
        <begin position="108"/>
        <end position="114"/>
    </location>
    <ligand>
        <name>ATP</name>
        <dbReference type="ChEBI" id="CHEBI:30616"/>
    </ligand>
</feature>
<feature type="binding site" evidence="1">
    <location>
        <position position="149"/>
    </location>
    <ligand>
        <name>UDP-N-acetyl-alpha-D-muramoyl-L-alanyl-D-glutamate</name>
        <dbReference type="ChEBI" id="CHEBI:83900"/>
    </ligand>
</feature>
<feature type="binding site" evidence="1">
    <location>
        <begin position="150"/>
        <end position="151"/>
    </location>
    <ligand>
        <name>UDP-N-acetyl-alpha-D-muramoyl-L-alanyl-D-glutamate</name>
        <dbReference type="ChEBI" id="CHEBI:83900"/>
    </ligand>
</feature>
<feature type="binding site" evidence="1">
    <location>
        <position position="177"/>
    </location>
    <ligand>
        <name>UDP-N-acetyl-alpha-D-muramoyl-L-alanyl-D-glutamate</name>
        <dbReference type="ChEBI" id="CHEBI:83900"/>
    </ligand>
</feature>
<feature type="binding site" evidence="1">
    <location>
        <position position="183"/>
    </location>
    <ligand>
        <name>UDP-N-acetyl-alpha-D-muramoyl-L-alanyl-D-glutamate</name>
        <dbReference type="ChEBI" id="CHEBI:83900"/>
    </ligand>
</feature>
<feature type="binding site" evidence="1">
    <location>
        <position position="185"/>
    </location>
    <ligand>
        <name>UDP-N-acetyl-alpha-D-muramoyl-L-alanyl-D-glutamate</name>
        <dbReference type="ChEBI" id="CHEBI:83900"/>
    </ligand>
</feature>
<feature type="binding site" evidence="1">
    <location>
        <position position="383"/>
    </location>
    <ligand>
        <name>meso-2,6-diaminopimelate</name>
        <dbReference type="ChEBI" id="CHEBI:57791"/>
    </ligand>
</feature>
<feature type="binding site" evidence="1">
    <location>
        <begin position="407"/>
        <end position="410"/>
    </location>
    <ligand>
        <name>meso-2,6-diaminopimelate</name>
        <dbReference type="ChEBI" id="CHEBI:57791"/>
    </ligand>
</feature>
<feature type="binding site" evidence="1">
    <location>
        <position position="459"/>
    </location>
    <ligand>
        <name>meso-2,6-diaminopimelate</name>
        <dbReference type="ChEBI" id="CHEBI:57791"/>
    </ligand>
</feature>
<feature type="binding site" evidence="1">
    <location>
        <position position="463"/>
    </location>
    <ligand>
        <name>meso-2,6-diaminopimelate</name>
        <dbReference type="ChEBI" id="CHEBI:57791"/>
    </ligand>
</feature>
<feature type="modified residue" description="N6-carboxylysine" evidence="1">
    <location>
        <position position="217"/>
    </location>
</feature>
<sequence>MKLQTLLSRLPGFWVHRGGNPDIVALEMDSRHVTPGSLFFCVKGFTVDGHDFAEQAVERGAVAIVAERPLSVNVPVVVVPDSRRAMAILADAFYGQPTHRLHLIGVTGTNGKTTTTHIIEQVARKAGKKIGLIGTVGTKIGDRSYPAVNTTPESLVLQRTFKQMVDEGVEFVTMEVSSHALHQGRVHGCDYDVAVFTNLTQDHLDYHGTMEEYRNAKGLLFAQLGNRYDERRPKFAVLNHDDPVSQYYKHMTAAPIITYGIKEKSDVMAEQIEMTPGGMAFQLCTPHGTMAIETKLVGLFNVYNLLAATAACLASGFSLATIAEALANVSPVPGRFETVDEGQNFTVIVDYAHTPDSVENALKTVRQFAKRNVYVVIGCGGDRDRTKRPLMAQAAVRYADVAVFTSDNPRSEDPRQILRDMEAGVSAGDGTYVTIPDREEAIRYAIGQAQEGDVVLIAGKGHETYQIIGDDVIDFDDRAVARAAVKERR</sequence>
<gene>
    <name evidence="1" type="primary">murE</name>
    <name type="ordered locus">GTNG_0980</name>
</gene>
<comment type="function">
    <text evidence="1">Catalyzes the addition of meso-diaminopimelic acid to the nucleotide precursor UDP-N-acetylmuramoyl-L-alanyl-D-glutamate (UMAG) in the biosynthesis of bacterial cell-wall peptidoglycan.</text>
</comment>
<comment type="catalytic activity">
    <reaction evidence="1">
        <text>UDP-N-acetyl-alpha-D-muramoyl-L-alanyl-D-glutamate + meso-2,6-diaminopimelate + ATP = UDP-N-acetyl-alpha-D-muramoyl-L-alanyl-gamma-D-glutamyl-meso-2,6-diaminopimelate + ADP + phosphate + H(+)</text>
        <dbReference type="Rhea" id="RHEA:23676"/>
        <dbReference type="ChEBI" id="CHEBI:15378"/>
        <dbReference type="ChEBI" id="CHEBI:30616"/>
        <dbReference type="ChEBI" id="CHEBI:43474"/>
        <dbReference type="ChEBI" id="CHEBI:57791"/>
        <dbReference type="ChEBI" id="CHEBI:83900"/>
        <dbReference type="ChEBI" id="CHEBI:83905"/>
        <dbReference type="ChEBI" id="CHEBI:456216"/>
        <dbReference type="EC" id="6.3.2.13"/>
    </reaction>
</comment>
<comment type="cofactor">
    <cofactor evidence="1">
        <name>Mg(2+)</name>
        <dbReference type="ChEBI" id="CHEBI:18420"/>
    </cofactor>
</comment>
<comment type="pathway">
    <text evidence="1">Cell wall biogenesis; peptidoglycan biosynthesis.</text>
</comment>
<comment type="subcellular location">
    <subcellularLocation>
        <location evidence="1">Cytoplasm</location>
    </subcellularLocation>
</comment>
<comment type="PTM">
    <text evidence="1">Carboxylation is probably crucial for Mg(2+) binding and, consequently, for the gamma-phosphate positioning of ATP.</text>
</comment>
<comment type="similarity">
    <text evidence="1">Belongs to the MurCDEF family. MurE subfamily.</text>
</comment>
<protein>
    <recommendedName>
        <fullName evidence="1">UDP-N-acetylmuramoyl-L-alanyl-D-glutamate--2,6-diaminopimelate ligase</fullName>
        <ecNumber evidence="1">6.3.2.13</ecNumber>
    </recommendedName>
    <alternativeName>
        <fullName evidence="1">Meso-A2pm-adding enzyme</fullName>
    </alternativeName>
    <alternativeName>
        <fullName evidence="1">Meso-diaminopimelate-adding enzyme</fullName>
    </alternativeName>
    <alternativeName>
        <fullName evidence="1">UDP-MurNAc-L-Ala-D-Glu:meso-diaminopimelate ligase</fullName>
    </alternativeName>
    <alternativeName>
        <fullName evidence="1">UDP-MurNAc-tripeptide synthetase</fullName>
    </alternativeName>
    <alternativeName>
        <fullName evidence="1">UDP-N-acetylmuramyl-tripeptide synthetase</fullName>
    </alternativeName>
</protein>
<name>MURE_GEOTN</name>
<evidence type="ECO:0000255" key="1">
    <source>
        <dbReference type="HAMAP-Rule" id="MF_00208"/>
    </source>
</evidence>
<accession>A4IM04</accession>
<reference key="1">
    <citation type="journal article" date="2007" name="Proc. Natl. Acad. Sci. U.S.A.">
        <title>Genome and proteome of long-chain alkane degrading Geobacillus thermodenitrificans NG80-2 isolated from a deep-subsurface oil reservoir.</title>
        <authorList>
            <person name="Feng L."/>
            <person name="Wang W."/>
            <person name="Cheng J."/>
            <person name="Ren Y."/>
            <person name="Zhao G."/>
            <person name="Gao C."/>
            <person name="Tang Y."/>
            <person name="Liu X."/>
            <person name="Han W."/>
            <person name="Peng X."/>
            <person name="Liu R."/>
            <person name="Wang L."/>
        </authorList>
    </citation>
    <scope>NUCLEOTIDE SEQUENCE [LARGE SCALE GENOMIC DNA]</scope>
    <source>
        <strain>NG80-2</strain>
    </source>
</reference>
<proteinExistence type="inferred from homology"/>
<keyword id="KW-0067">ATP-binding</keyword>
<keyword id="KW-0131">Cell cycle</keyword>
<keyword id="KW-0132">Cell division</keyword>
<keyword id="KW-0133">Cell shape</keyword>
<keyword id="KW-0961">Cell wall biogenesis/degradation</keyword>
<keyword id="KW-0963">Cytoplasm</keyword>
<keyword id="KW-0436">Ligase</keyword>
<keyword id="KW-0460">Magnesium</keyword>
<keyword id="KW-0547">Nucleotide-binding</keyword>
<keyword id="KW-0573">Peptidoglycan synthesis</keyword>